<feature type="chain" id="PRO_0000422226" description="CRISPR-associated endonuclease Cas1/endonuclease Cas2 fusion">
    <location>
        <begin position="1"/>
        <end position="264"/>
    </location>
</feature>
<feature type="region of interest" description="CRISPR-associated endonuclease Cas1">
    <location>
        <begin position="1"/>
        <end position="104"/>
    </location>
</feature>
<feature type="region of interest" description="Disordered" evidence="3">
    <location>
        <begin position="108"/>
        <end position="167"/>
    </location>
</feature>
<feature type="region of interest" description="CRISPR-associated endonuclease Cas2">
    <location>
        <begin position="176"/>
        <end position="264"/>
    </location>
</feature>
<feature type="compositionally biased region" description="Low complexity" evidence="3">
    <location>
        <begin position="143"/>
        <end position="155"/>
    </location>
</feature>
<feature type="binding site" evidence="2">
    <location>
        <position position="182"/>
    </location>
    <ligand>
        <name>Mg(2+)</name>
        <dbReference type="ChEBI" id="CHEBI:18420"/>
        <note>catalytic</note>
    </ligand>
</feature>
<name>CS1F2_THETK</name>
<organism>
    <name type="scientific">Thermoproteus tenax (strain ATCC 35583 / DSM 2078 / JCM 9277 / NBRC 100435 / Kra 1)</name>
    <dbReference type="NCBI Taxonomy" id="768679"/>
    <lineage>
        <taxon>Archaea</taxon>
        <taxon>Thermoproteota</taxon>
        <taxon>Thermoprotei</taxon>
        <taxon>Thermoproteales</taxon>
        <taxon>Thermoproteaceae</taxon>
        <taxon>Thermoproteus</taxon>
    </lineage>
</organism>
<dbReference type="EC" id="3.1.-.-"/>
<dbReference type="EMBL" id="FN869859">
    <property type="protein sequence ID" value="CCC81881.1"/>
    <property type="molecule type" value="Genomic_DNA"/>
</dbReference>
<dbReference type="RefSeq" id="WP_014127136.1">
    <property type="nucleotide sequence ID" value="NC_016070.1"/>
</dbReference>
<dbReference type="SMR" id="G4RJY6"/>
<dbReference type="STRING" id="768679.TTX_1246"/>
<dbReference type="PaxDb" id="768679-TTX_1246"/>
<dbReference type="GeneID" id="11262126"/>
<dbReference type="KEGG" id="ttn:TTX_1246"/>
<dbReference type="PATRIC" id="fig|768679.9.peg.1259"/>
<dbReference type="eggNOG" id="arCOG01452">
    <property type="taxonomic scope" value="Archaea"/>
</dbReference>
<dbReference type="eggNOG" id="arCOG04194">
    <property type="taxonomic scope" value="Archaea"/>
</dbReference>
<dbReference type="HOGENOM" id="CLU_1052197_0_0_2"/>
<dbReference type="Proteomes" id="UP000002654">
    <property type="component" value="Chromosome"/>
</dbReference>
<dbReference type="GO" id="GO:0046872">
    <property type="term" value="F:metal ion binding"/>
    <property type="evidence" value="ECO:0007669"/>
    <property type="project" value="UniProtKB-UniRule"/>
</dbReference>
<dbReference type="GO" id="GO:0003676">
    <property type="term" value="F:nucleic acid binding"/>
    <property type="evidence" value="ECO:0007669"/>
    <property type="project" value="InterPro"/>
</dbReference>
<dbReference type="GO" id="GO:0004521">
    <property type="term" value="F:RNA endonuclease activity"/>
    <property type="evidence" value="ECO:0007669"/>
    <property type="project" value="InterPro"/>
</dbReference>
<dbReference type="GO" id="GO:0051607">
    <property type="term" value="P:defense response to virus"/>
    <property type="evidence" value="ECO:0007669"/>
    <property type="project" value="UniProtKB-UniRule"/>
</dbReference>
<dbReference type="GO" id="GO:0043571">
    <property type="term" value="P:maintenance of CRISPR repeat elements"/>
    <property type="evidence" value="ECO:0007669"/>
    <property type="project" value="UniProtKB-UniRule"/>
</dbReference>
<dbReference type="Gene3D" id="3.30.70.240">
    <property type="match status" value="1"/>
</dbReference>
<dbReference type="HAMAP" id="MF_01471">
    <property type="entry name" value="Cas2"/>
    <property type="match status" value="1"/>
</dbReference>
<dbReference type="InterPro" id="IPR002729">
    <property type="entry name" value="CRISPR-assoc_Cas1"/>
</dbReference>
<dbReference type="InterPro" id="IPR021127">
    <property type="entry name" value="CRISPR_associated_Cas2"/>
</dbReference>
<dbReference type="InterPro" id="IPR019199">
    <property type="entry name" value="Virulence_VapD/CRISPR_Cas2"/>
</dbReference>
<dbReference type="NCBIfam" id="TIGR01573">
    <property type="entry name" value="cas2"/>
    <property type="match status" value="1"/>
</dbReference>
<dbReference type="PANTHER" id="PTHR34405">
    <property type="entry name" value="CRISPR-ASSOCIATED ENDORIBONUCLEASE CAS2"/>
    <property type="match status" value="1"/>
</dbReference>
<dbReference type="PANTHER" id="PTHR34405:SF3">
    <property type="entry name" value="CRISPR-ASSOCIATED ENDORIBONUCLEASE CAS2 3"/>
    <property type="match status" value="1"/>
</dbReference>
<dbReference type="Pfam" id="PF01867">
    <property type="entry name" value="Cas_Cas1"/>
    <property type="match status" value="1"/>
</dbReference>
<dbReference type="Pfam" id="PF09827">
    <property type="entry name" value="CRISPR_Cas2"/>
    <property type="match status" value="1"/>
</dbReference>
<dbReference type="SUPFAM" id="SSF143430">
    <property type="entry name" value="TTP0101/SSO1404-like"/>
    <property type="match status" value="1"/>
</dbReference>
<evidence type="ECO:0000250" key="1"/>
<evidence type="ECO:0000255" key="2"/>
<evidence type="ECO:0000256" key="3">
    <source>
        <dbReference type="SAM" id="MobiDB-lite"/>
    </source>
</evidence>
<evidence type="ECO:0000269" key="4">
    <source>
    </source>
</evidence>
<evidence type="ECO:0000305" key="5"/>
<comment type="function">
    <text evidence="1">CRISPR (clustered regularly interspaced short palindromic repeat), is an adaptive immune system that provides protection against mobile genetic elements (viruses, transposable elements and conjugative plasmids). CRISPR clusters contain sequences complementary to antecedent mobile elements and target invading nucleic acids. CRISPR clusters are transcribed and processed into CRISPR RNA (crRNA). Functions as a ssRNA-specific endoribonuclease. Involved in the integration of spacer DNA into the CRISPR cassette (By similarity).</text>
</comment>
<comment type="cofactor">
    <cofactor evidence="1">
        <name>Mg(2+)</name>
        <dbReference type="ChEBI" id="CHEBI:18420"/>
    </cofactor>
</comment>
<comment type="subunit">
    <text evidence="1 4">Homodimer, forms a heterotetramer with a Cas1 homodimer (By similarity). Can form a Cascis complex with Cas4 and Csa1.</text>
</comment>
<comment type="induction">
    <text evidence="4">Slightly induced by 20 J/m2 ultraviolet light. Member of the csa1-cas1/2-cas4 operon.</text>
</comment>
<comment type="similarity">
    <text evidence="5">In the N-terminal section; belongs to the CRISPR-associated endonuclease Cas1 family.</text>
</comment>
<comment type="similarity">
    <text evidence="5">In the C-terminal section; belongs to the CRISPR-associated endoribonuclease Cas2 protein family.</text>
</comment>
<comment type="caution">
    <text evidence="5">Neither Cas1 nor Cas2 are fully present in this fusion protein, however as this is the only copy of these proteins in this organism they are probably functional. The Cas1 section is much smaller than usual and it is quite atypical.</text>
</comment>
<accession>G4RJY6</accession>
<proteinExistence type="evidence at protein level"/>
<gene>
    <name type="primary">cas2</name>
    <name type="synonym">cas1</name>
    <name type="ordered locus">TTX_1246</name>
</gene>
<keyword id="KW-0051">Antiviral defense</keyword>
<keyword id="KW-0255">Endonuclease</keyword>
<keyword id="KW-0378">Hydrolase</keyword>
<keyword id="KW-0460">Magnesium</keyword>
<keyword id="KW-0479">Metal-binding</keyword>
<keyword id="KW-0540">Nuclease</keyword>
<keyword id="KW-1185">Reference proteome</keyword>
<reference key="1">
    <citation type="journal article" date="2011" name="PLoS ONE">
        <title>The complete genome sequence of Thermoproteus tenax: a physiologically versatile member of the Crenarchaeota.</title>
        <authorList>
            <person name="Siebers B."/>
            <person name="Zaparty M."/>
            <person name="Raddatz G."/>
            <person name="Tjaden B."/>
            <person name="Albers S.V."/>
            <person name="Bell S.D."/>
            <person name="Blombach F."/>
            <person name="Kletzin A."/>
            <person name="Kyrpides N."/>
            <person name="Lanz C."/>
            <person name="Plagens A."/>
            <person name="Rampp M."/>
            <person name="Rosinus A."/>
            <person name="von Jan M."/>
            <person name="Makarova K.S."/>
            <person name="Klenk H.P."/>
            <person name="Schuster S.C."/>
            <person name="Hensel R."/>
        </authorList>
    </citation>
    <scope>NUCLEOTIDE SEQUENCE [LARGE SCALE GENOMIC DNA]</scope>
    <source>
        <strain>ATCC 35583 / DSM 2078 / JCM 9277 / NBRC 100435 / Kra 1</strain>
    </source>
</reference>
<reference key="2">
    <citation type="journal article" date="2012" name="J. Bacteriol.">
        <title>Characterization of the CRISPR/Cas subtype I-A system of the hyperthermophilic crenarchaeon Thermoproteus tenax.</title>
        <authorList>
            <person name="Plagens A."/>
            <person name="Tjaden B."/>
            <person name="Hagemann A."/>
            <person name="Randau L."/>
            <person name="Hensel R."/>
        </authorList>
    </citation>
    <scope>SUBUNIT</scope>
    <scope>INDUCTION</scope>
    <scope>OPERON STRUCTURE</scope>
    <source>
        <strain>ATCC 35583 / DSM 2078 / JCM 9277 / NBRC 100435 / Kra 1</strain>
    </source>
</reference>
<sequence length="264" mass="28671">MDEVLLLTGGISITTRALRALLATGATVAVFSPRGEPLGIFMRPVGDATGAKRRCQYKAAEDGRGLQYAKSWVFKKILGQRDNIKAWRRRLRGYSQYAESLAKALPGAGLHGAMETPRRRRRGQDGGQAGVRGRPTHPPVPPGAGRRSPGGAPRGQEASLRRDPQRGQSSGALHMYVIVVYDITENDVRAKVADILRAYGLARIQRSAYVGRLPPALVKELAERLARAVRGANADIAIFKVDKRTIDTSLRIPPRPPAGHVALH</sequence>
<protein>
    <recommendedName>
        <fullName>CRISPR-associated endonuclease Cas1/endonuclease Cas2 fusion</fullName>
        <ecNumber>3.1.-.-</ecNumber>
    </recommendedName>
</protein>